<keyword id="KW-1185">Reference proteome</keyword>
<keyword id="KW-0687">Ribonucleoprotein</keyword>
<keyword id="KW-0689">Ribosomal protein</keyword>
<keyword id="KW-0694">RNA-binding</keyword>
<keyword id="KW-0699">rRNA-binding</keyword>
<feature type="chain" id="PRO_0000104662" description="Large ribosomal subunit protein uL15">
    <location>
        <begin position="1"/>
        <end position="159"/>
    </location>
</feature>
<feature type="region of interest" description="Disordered" evidence="2">
    <location>
        <begin position="1"/>
        <end position="37"/>
    </location>
</feature>
<feature type="compositionally biased region" description="Basic and acidic residues" evidence="2">
    <location>
        <begin position="1"/>
        <end position="18"/>
    </location>
</feature>
<feature type="compositionally biased region" description="Gly residues" evidence="2">
    <location>
        <begin position="21"/>
        <end position="35"/>
    </location>
</feature>
<sequence>MKLNEIRDNEGSSKDRIRVGRGIGSGKGKTGGRGVKGQKARSGVAINGFEGGQMPIYRRLPKRGFNNIFGSEFAVVSLGRIQTAIDAKKLDASATIDAAALKAAGVIRRVKDGVRILADGELTSKVAFEVAGASKPALEKIEKAGSSIKLLAVAVEASE</sequence>
<gene>
    <name evidence="1" type="primary">rplO</name>
    <name type="ordered locus">Atu1928</name>
    <name type="ORF">AGR_C_3525</name>
</gene>
<reference key="1">
    <citation type="journal article" date="2001" name="Science">
        <title>The genome of the natural genetic engineer Agrobacterium tumefaciens C58.</title>
        <authorList>
            <person name="Wood D.W."/>
            <person name="Setubal J.C."/>
            <person name="Kaul R."/>
            <person name="Monks D.E."/>
            <person name="Kitajima J.P."/>
            <person name="Okura V.K."/>
            <person name="Zhou Y."/>
            <person name="Chen L."/>
            <person name="Wood G.E."/>
            <person name="Almeida N.F. Jr."/>
            <person name="Woo L."/>
            <person name="Chen Y."/>
            <person name="Paulsen I.T."/>
            <person name="Eisen J.A."/>
            <person name="Karp P.D."/>
            <person name="Bovee D. Sr."/>
            <person name="Chapman P."/>
            <person name="Clendenning J."/>
            <person name="Deatherage G."/>
            <person name="Gillet W."/>
            <person name="Grant C."/>
            <person name="Kutyavin T."/>
            <person name="Levy R."/>
            <person name="Li M.-J."/>
            <person name="McClelland E."/>
            <person name="Palmieri A."/>
            <person name="Raymond C."/>
            <person name="Rouse G."/>
            <person name="Saenphimmachak C."/>
            <person name="Wu Z."/>
            <person name="Romero P."/>
            <person name="Gordon D."/>
            <person name="Zhang S."/>
            <person name="Yoo H."/>
            <person name="Tao Y."/>
            <person name="Biddle P."/>
            <person name="Jung M."/>
            <person name="Krespan W."/>
            <person name="Perry M."/>
            <person name="Gordon-Kamm B."/>
            <person name="Liao L."/>
            <person name="Kim S."/>
            <person name="Hendrick C."/>
            <person name="Zhao Z.-Y."/>
            <person name="Dolan M."/>
            <person name="Chumley F."/>
            <person name="Tingey S.V."/>
            <person name="Tomb J.-F."/>
            <person name="Gordon M.P."/>
            <person name="Olson M.V."/>
            <person name="Nester E.W."/>
        </authorList>
    </citation>
    <scope>NUCLEOTIDE SEQUENCE [LARGE SCALE GENOMIC DNA]</scope>
    <source>
        <strain>C58 / ATCC 33970</strain>
    </source>
</reference>
<reference key="2">
    <citation type="journal article" date="2001" name="Science">
        <title>Genome sequence of the plant pathogen and biotechnology agent Agrobacterium tumefaciens C58.</title>
        <authorList>
            <person name="Goodner B."/>
            <person name="Hinkle G."/>
            <person name="Gattung S."/>
            <person name="Miller N."/>
            <person name="Blanchard M."/>
            <person name="Qurollo B."/>
            <person name="Goldman B.S."/>
            <person name="Cao Y."/>
            <person name="Askenazi M."/>
            <person name="Halling C."/>
            <person name="Mullin L."/>
            <person name="Houmiel K."/>
            <person name="Gordon J."/>
            <person name="Vaudin M."/>
            <person name="Iartchouk O."/>
            <person name="Epp A."/>
            <person name="Liu F."/>
            <person name="Wollam C."/>
            <person name="Allinger M."/>
            <person name="Doughty D."/>
            <person name="Scott C."/>
            <person name="Lappas C."/>
            <person name="Markelz B."/>
            <person name="Flanagan C."/>
            <person name="Crowell C."/>
            <person name="Gurson J."/>
            <person name="Lomo C."/>
            <person name="Sear C."/>
            <person name="Strub G."/>
            <person name="Cielo C."/>
            <person name="Slater S."/>
        </authorList>
    </citation>
    <scope>NUCLEOTIDE SEQUENCE [LARGE SCALE GENOMIC DNA]</scope>
    <source>
        <strain>C58 / ATCC 33970</strain>
    </source>
</reference>
<organism>
    <name type="scientific">Agrobacterium fabrum (strain C58 / ATCC 33970)</name>
    <name type="common">Agrobacterium tumefaciens (strain C58)</name>
    <dbReference type="NCBI Taxonomy" id="176299"/>
    <lineage>
        <taxon>Bacteria</taxon>
        <taxon>Pseudomonadati</taxon>
        <taxon>Pseudomonadota</taxon>
        <taxon>Alphaproteobacteria</taxon>
        <taxon>Hyphomicrobiales</taxon>
        <taxon>Rhizobiaceae</taxon>
        <taxon>Rhizobium/Agrobacterium group</taxon>
        <taxon>Agrobacterium</taxon>
        <taxon>Agrobacterium tumefaciens complex</taxon>
    </lineage>
</organism>
<accession>Q8UE36</accession>
<accession>Q7CY82</accession>
<comment type="function">
    <text evidence="1">Binds to the 23S rRNA.</text>
</comment>
<comment type="subunit">
    <text evidence="1">Part of the 50S ribosomal subunit.</text>
</comment>
<comment type="similarity">
    <text evidence="1">Belongs to the universal ribosomal protein uL15 family.</text>
</comment>
<dbReference type="EMBL" id="AE007869">
    <property type="protein sequence ID" value="AAK87690.2"/>
    <property type="molecule type" value="Genomic_DNA"/>
</dbReference>
<dbReference type="PIR" id="A97592">
    <property type="entry name" value="A97592"/>
</dbReference>
<dbReference type="PIR" id="AF2813">
    <property type="entry name" value="AF2813"/>
</dbReference>
<dbReference type="RefSeq" id="NP_354905.2">
    <property type="nucleotide sequence ID" value="NC_003062.2"/>
</dbReference>
<dbReference type="RefSeq" id="WP_006313981.1">
    <property type="nucleotide sequence ID" value="NC_003062.2"/>
</dbReference>
<dbReference type="SMR" id="Q8UE36"/>
<dbReference type="STRING" id="176299.Atu1928"/>
<dbReference type="EnsemblBacteria" id="AAK87690">
    <property type="protein sequence ID" value="AAK87690"/>
    <property type="gene ID" value="Atu1928"/>
</dbReference>
<dbReference type="GeneID" id="1133966"/>
<dbReference type="KEGG" id="atu:Atu1928"/>
<dbReference type="PATRIC" id="fig|176299.10.peg.1939"/>
<dbReference type="eggNOG" id="COG0200">
    <property type="taxonomic scope" value="Bacteria"/>
</dbReference>
<dbReference type="HOGENOM" id="CLU_055188_4_0_5"/>
<dbReference type="OrthoDB" id="9810293at2"/>
<dbReference type="PhylomeDB" id="Q8UE36"/>
<dbReference type="BioCyc" id="AGRO:ATU1928-MONOMER"/>
<dbReference type="Proteomes" id="UP000000813">
    <property type="component" value="Chromosome circular"/>
</dbReference>
<dbReference type="GO" id="GO:0022625">
    <property type="term" value="C:cytosolic large ribosomal subunit"/>
    <property type="evidence" value="ECO:0007669"/>
    <property type="project" value="TreeGrafter"/>
</dbReference>
<dbReference type="GO" id="GO:0019843">
    <property type="term" value="F:rRNA binding"/>
    <property type="evidence" value="ECO:0007669"/>
    <property type="project" value="UniProtKB-UniRule"/>
</dbReference>
<dbReference type="GO" id="GO:0003735">
    <property type="term" value="F:structural constituent of ribosome"/>
    <property type="evidence" value="ECO:0007669"/>
    <property type="project" value="InterPro"/>
</dbReference>
<dbReference type="GO" id="GO:0006412">
    <property type="term" value="P:translation"/>
    <property type="evidence" value="ECO:0007669"/>
    <property type="project" value="UniProtKB-UniRule"/>
</dbReference>
<dbReference type="Gene3D" id="3.100.10.10">
    <property type="match status" value="1"/>
</dbReference>
<dbReference type="HAMAP" id="MF_01341">
    <property type="entry name" value="Ribosomal_uL15"/>
    <property type="match status" value="1"/>
</dbReference>
<dbReference type="InterPro" id="IPR030878">
    <property type="entry name" value="Ribosomal_uL15"/>
</dbReference>
<dbReference type="InterPro" id="IPR021131">
    <property type="entry name" value="Ribosomal_uL15/eL18"/>
</dbReference>
<dbReference type="InterPro" id="IPR036227">
    <property type="entry name" value="Ribosomal_uL15/eL18_sf"/>
</dbReference>
<dbReference type="InterPro" id="IPR005749">
    <property type="entry name" value="Ribosomal_uL15_bac-type"/>
</dbReference>
<dbReference type="InterPro" id="IPR001196">
    <property type="entry name" value="Ribosomal_uL15_CS"/>
</dbReference>
<dbReference type="NCBIfam" id="TIGR01071">
    <property type="entry name" value="rplO_bact"/>
    <property type="match status" value="1"/>
</dbReference>
<dbReference type="PANTHER" id="PTHR12934">
    <property type="entry name" value="50S RIBOSOMAL PROTEIN L15"/>
    <property type="match status" value="1"/>
</dbReference>
<dbReference type="PANTHER" id="PTHR12934:SF11">
    <property type="entry name" value="LARGE RIBOSOMAL SUBUNIT PROTEIN UL15M"/>
    <property type="match status" value="1"/>
</dbReference>
<dbReference type="Pfam" id="PF00828">
    <property type="entry name" value="Ribosomal_L27A"/>
    <property type="match status" value="1"/>
</dbReference>
<dbReference type="SUPFAM" id="SSF52080">
    <property type="entry name" value="Ribosomal proteins L15p and L18e"/>
    <property type="match status" value="1"/>
</dbReference>
<dbReference type="PROSITE" id="PS00475">
    <property type="entry name" value="RIBOSOMAL_L15"/>
    <property type="match status" value="1"/>
</dbReference>
<protein>
    <recommendedName>
        <fullName evidence="1">Large ribosomal subunit protein uL15</fullName>
    </recommendedName>
    <alternativeName>
        <fullName evidence="3">50S ribosomal protein L15</fullName>
    </alternativeName>
</protein>
<evidence type="ECO:0000255" key="1">
    <source>
        <dbReference type="HAMAP-Rule" id="MF_01341"/>
    </source>
</evidence>
<evidence type="ECO:0000256" key="2">
    <source>
        <dbReference type="SAM" id="MobiDB-lite"/>
    </source>
</evidence>
<evidence type="ECO:0000305" key="3"/>
<proteinExistence type="inferred from homology"/>
<name>RL15_AGRFC</name>